<name>TAZR_ASPTN</name>
<protein>
    <recommendedName>
        <fullName evidence="4">Transcription factor tazR</fullName>
    </recommendedName>
    <alternativeName>
        <fullName evidence="4">Azaphilone biosynthesis cluster protein R</fullName>
    </alternativeName>
</protein>
<comment type="function">
    <text evidence="3">Transcription factor that regulates the expression of the gene cluster that mediates the biosynthesis of azaterrilone A and other azaphilones, a class of fungal metabolites characterized by a highly oxygenated pyrano-quinone bicyclic core and exhibiting a broad range of bioactivities.</text>
</comment>
<comment type="subcellular location">
    <subcellularLocation>
        <location evidence="1">Nucleus</location>
    </subcellularLocation>
</comment>
<reference key="1">
    <citation type="submission" date="2005-09" db="EMBL/GenBank/DDBJ databases">
        <title>Annotation of the Aspergillus terreus NIH2624 genome.</title>
        <authorList>
            <person name="Birren B.W."/>
            <person name="Lander E.S."/>
            <person name="Galagan J.E."/>
            <person name="Nusbaum C."/>
            <person name="Devon K."/>
            <person name="Henn M."/>
            <person name="Ma L.-J."/>
            <person name="Jaffe D.B."/>
            <person name="Butler J."/>
            <person name="Alvarez P."/>
            <person name="Gnerre S."/>
            <person name="Grabherr M."/>
            <person name="Kleber M."/>
            <person name="Mauceli E.W."/>
            <person name="Brockman W."/>
            <person name="Rounsley S."/>
            <person name="Young S.K."/>
            <person name="LaButti K."/>
            <person name="Pushparaj V."/>
            <person name="DeCaprio D."/>
            <person name="Crawford M."/>
            <person name="Koehrsen M."/>
            <person name="Engels R."/>
            <person name="Montgomery P."/>
            <person name="Pearson M."/>
            <person name="Howarth C."/>
            <person name="Larson L."/>
            <person name="Luoma S."/>
            <person name="White J."/>
            <person name="Alvarado L."/>
            <person name="Kodira C.D."/>
            <person name="Zeng Q."/>
            <person name="Oleary S."/>
            <person name="Yandava C."/>
            <person name="Denning D.W."/>
            <person name="Nierman W.C."/>
            <person name="Milne T."/>
            <person name="Madden K."/>
        </authorList>
    </citation>
    <scope>NUCLEOTIDE SEQUENCE [LARGE SCALE GENOMIC DNA]</scope>
    <source>
        <strain>NIH 2624 / FGSC A1156</strain>
    </source>
</reference>
<reference key="2">
    <citation type="journal article" date="2022" name="Fungal Genet. Biol.">
        <title>Characterization of a silent azaphilone biosynthesis gene cluster in Aspergillus terreus NIH 2624.</title>
        <authorList>
            <person name="Sun W.W."/>
            <person name="Li C.Y."/>
            <person name="Chiang Y.M."/>
            <person name="Lin T.S."/>
            <person name="Warren S."/>
            <person name="Chang F.R."/>
            <person name="Wang C.C.C."/>
        </authorList>
    </citation>
    <scope>FUNCTION</scope>
</reference>
<keyword id="KW-0238">DNA-binding</keyword>
<keyword id="KW-0479">Metal-binding</keyword>
<keyword id="KW-0539">Nucleus</keyword>
<keyword id="KW-1185">Reference proteome</keyword>
<keyword id="KW-0804">Transcription</keyword>
<keyword id="KW-0805">Transcription regulation</keyword>
<keyword id="KW-0862">Zinc</keyword>
<gene>
    <name evidence="4" type="primary">tazR</name>
    <name type="ORF">ATEG_03445</name>
</gene>
<feature type="chain" id="PRO_0000456063" description="Transcription factor tazR">
    <location>
        <begin position="1"/>
        <end position="632"/>
    </location>
</feature>
<feature type="DNA-binding region" description="Zn(2)-C6 fungal-type" evidence="1">
    <location>
        <begin position="20"/>
        <end position="47"/>
    </location>
</feature>
<feature type="region of interest" description="Disordered" evidence="2">
    <location>
        <begin position="77"/>
        <end position="130"/>
    </location>
</feature>
<organism>
    <name type="scientific">Aspergillus terreus (strain NIH 2624 / FGSC A1156)</name>
    <dbReference type="NCBI Taxonomy" id="341663"/>
    <lineage>
        <taxon>Eukaryota</taxon>
        <taxon>Fungi</taxon>
        <taxon>Dikarya</taxon>
        <taxon>Ascomycota</taxon>
        <taxon>Pezizomycotina</taxon>
        <taxon>Eurotiomycetes</taxon>
        <taxon>Eurotiomycetidae</taxon>
        <taxon>Eurotiales</taxon>
        <taxon>Aspergillaceae</taxon>
        <taxon>Aspergillus</taxon>
        <taxon>Aspergillus subgen. Circumdati</taxon>
    </lineage>
</organism>
<dbReference type="EMBL" id="CH476597">
    <property type="protein sequence ID" value="EAU36719.1"/>
    <property type="molecule type" value="Genomic_DNA"/>
</dbReference>
<dbReference type="RefSeq" id="XP_001212623.1">
    <property type="nucleotide sequence ID" value="XM_001212623.1"/>
</dbReference>
<dbReference type="STRING" id="341663.Q0CS89"/>
<dbReference type="EnsemblFungi" id="EAU36719">
    <property type="protein sequence ID" value="EAU36719"/>
    <property type="gene ID" value="ATEG_03445"/>
</dbReference>
<dbReference type="GeneID" id="4317678"/>
<dbReference type="VEuPathDB" id="FungiDB:ATEG_03445"/>
<dbReference type="eggNOG" id="ENOG502SH49">
    <property type="taxonomic scope" value="Eukaryota"/>
</dbReference>
<dbReference type="HOGENOM" id="CLU_011017_3_1_1"/>
<dbReference type="OMA" id="IACNEYL"/>
<dbReference type="OrthoDB" id="3037908at2759"/>
<dbReference type="Proteomes" id="UP000007963">
    <property type="component" value="Unassembled WGS sequence"/>
</dbReference>
<dbReference type="GO" id="GO:0005634">
    <property type="term" value="C:nucleus"/>
    <property type="evidence" value="ECO:0007669"/>
    <property type="project" value="UniProtKB-SubCell"/>
</dbReference>
<dbReference type="GO" id="GO:0003677">
    <property type="term" value="F:DNA binding"/>
    <property type="evidence" value="ECO:0007669"/>
    <property type="project" value="UniProtKB-KW"/>
</dbReference>
<dbReference type="GO" id="GO:0000981">
    <property type="term" value="F:DNA-binding transcription factor activity, RNA polymerase II-specific"/>
    <property type="evidence" value="ECO:0007669"/>
    <property type="project" value="InterPro"/>
</dbReference>
<dbReference type="GO" id="GO:0008270">
    <property type="term" value="F:zinc ion binding"/>
    <property type="evidence" value="ECO:0007669"/>
    <property type="project" value="InterPro"/>
</dbReference>
<dbReference type="GO" id="GO:0006351">
    <property type="term" value="P:DNA-templated transcription"/>
    <property type="evidence" value="ECO:0007669"/>
    <property type="project" value="InterPro"/>
</dbReference>
<dbReference type="GO" id="GO:0009893">
    <property type="term" value="P:positive regulation of metabolic process"/>
    <property type="evidence" value="ECO:0007669"/>
    <property type="project" value="UniProtKB-ARBA"/>
</dbReference>
<dbReference type="CDD" id="cd12148">
    <property type="entry name" value="fungal_TF_MHR"/>
    <property type="match status" value="1"/>
</dbReference>
<dbReference type="CDD" id="cd00067">
    <property type="entry name" value="GAL4"/>
    <property type="match status" value="1"/>
</dbReference>
<dbReference type="Gene3D" id="4.10.240.10">
    <property type="entry name" value="Zn(2)-C6 fungal-type DNA-binding domain"/>
    <property type="match status" value="1"/>
</dbReference>
<dbReference type="InterPro" id="IPR050815">
    <property type="entry name" value="TF_fung"/>
</dbReference>
<dbReference type="InterPro" id="IPR007219">
    <property type="entry name" value="Transcription_factor_dom_fun"/>
</dbReference>
<dbReference type="InterPro" id="IPR036864">
    <property type="entry name" value="Zn2-C6_fun-type_DNA-bd_sf"/>
</dbReference>
<dbReference type="InterPro" id="IPR001138">
    <property type="entry name" value="Zn2Cys6_DnaBD"/>
</dbReference>
<dbReference type="PANTHER" id="PTHR47338:SF3">
    <property type="entry name" value="C6 FINGER DOMAIN TRANSCRIPTION FACTOR DBAA-RELATED"/>
    <property type="match status" value="1"/>
</dbReference>
<dbReference type="PANTHER" id="PTHR47338">
    <property type="entry name" value="ZN(II)2CYS6 TRANSCRIPTION FACTOR (EUROFUNG)-RELATED"/>
    <property type="match status" value="1"/>
</dbReference>
<dbReference type="Pfam" id="PF04082">
    <property type="entry name" value="Fungal_trans"/>
    <property type="match status" value="1"/>
</dbReference>
<dbReference type="Pfam" id="PF00172">
    <property type="entry name" value="Zn_clus"/>
    <property type="match status" value="1"/>
</dbReference>
<dbReference type="SMART" id="SM00906">
    <property type="entry name" value="Fungal_trans"/>
    <property type="match status" value="1"/>
</dbReference>
<dbReference type="SMART" id="SM00066">
    <property type="entry name" value="GAL4"/>
    <property type="match status" value="1"/>
</dbReference>
<dbReference type="SUPFAM" id="SSF57701">
    <property type="entry name" value="Zn2/Cys6 DNA-binding domain"/>
    <property type="match status" value="1"/>
</dbReference>
<dbReference type="PROSITE" id="PS00463">
    <property type="entry name" value="ZN2_CY6_FUNGAL_1"/>
    <property type="match status" value="1"/>
</dbReference>
<dbReference type="PROSITE" id="PS50048">
    <property type="entry name" value="ZN2_CY6_FUNGAL_2"/>
    <property type="match status" value="1"/>
</dbReference>
<sequence length="632" mass="70817">MSPSLNEPERLNRQAQGLACNECRARKLRCDRVRPTCGTCESLGVTCTPNSVRQPRGPRKGYLKTLQSRISALERQWNGQQKAAGGSPGESPPCSEGGQTLRAVSESTSDGVHDEDHANGARPPSSQSSIEQPILQPTVSLDGISALHGFAPVNSPFAFALPGTDPSKTVDLFSHMECFPSMPTKLDPRAYVPQQLTPNSTMSNGQFDLPTDLSVTSEFQLPELMKADLSHLYFDRVHPFAPILNKRRYFARAARPVSEQGAMTCLQHAMWTLAAWLGSQFKHIQKDLYIYTRGLLEKWELNMHPGNPPIELAQARLFLAIYEIMQVNYERGWLSAGRCFRLIQLMKLHEIDVPDGISESGISFGEIEERRRTFWMAYSLDRFINLINKMPLTLNEQVIFTRLPAPEGAFQRERPVQTQFLSEFMAGDDDLQIVSPFSACIVVMTISGRCLSHQQQCMVERAYGGMPQDFITRHQWLEGILMSKGKAIVDCISNDLDDELTDPMLLFTNMAAHATTLLLGMTMQTGLCNYESLISGFEERATEAAQKILHLCQRLNECGYFKVHPFTPIPLVFCAEWAQGRKNQNPAFEPLHNSMLCSLRDLSVVNMLAETCLARLNDSNPQMETDMSKSQS</sequence>
<proteinExistence type="inferred from homology"/>
<accession>Q0CS89</accession>
<evidence type="ECO:0000255" key="1">
    <source>
        <dbReference type="PROSITE-ProRule" id="PRU00227"/>
    </source>
</evidence>
<evidence type="ECO:0000256" key="2">
    <source>
        <dbReference type="SAM" id="MobiDB-lite"/>
    </source>
</evidence>
<evidence type="ECO:0000269" key="3">
    <source>
    </source>
</evidence>
<evidence type="ECO:0000303" key="4">
    <source>
    </source>
</evidence>